<name>LEPA_BACFR</name>
<accession>Q64T74</accession>
<dbReference type="EC" id="3.6.5.n1" evidence="1"/>
<dbReference type="EMBL" id="AP006841">
    <property type="protein sequence ID" value="BAD49305.1"/>
    <property type="molecule type" value="Genomic_DNA"/>
</dbReference>
<dbReference type="RefSeq" id="WP_005788089.1">
    <property type="nucleotide sequence ID" value="NC_006347.1"/>
</dbReference>
<dbReference type="RefSeq" id="YP_099839.1">
    <property type="nucleotide sequence ID" value="NC_006347.1"/>
</dbReference>
<dbReference type="SMR" id="Q64T74"/>
<dbReference type="STRING" id="295405.BF2556"/>
<dbReference type="GeneID" id="60369046"/>
<dbReference type="KEGG" id="bfr:BF2556"/>
<dbReference type="PATRIC" id="fig|295405.11.peg.2465"/>
<dbReference type="HOGENOM" id="CLU_009995_3_3_10"/>
<dbReference type="OrthoDB" id="9801591at2"/>
<dbReference type="Proteomes" id="UP000002197">
    <property type="component" value="Chromosome"/>
</dbReference>
<dbReference type="GO" id="GO:0005886">
    <property type="term" value="C:plasma membrane"/>
    <property type="evidence" value="ECO:0007669"/>
    <property type="project" value="UniProtKB-SubCell"/>
</dbReference>
<dbReference type="GO" id="GO:0005525">
    <property type="term" value="F:GTP binding"/>
    <property type="evidence" value="ECO:0007669"/>
    <property type="project" value="UniProtKB-UniRule"/>
</dbReference>
<dbReference type="GO" id="GO:0003924">
    <property type="term" value="F:GTPase activity"/>
    <property type="evidence" value="ECO:0007669"/>
    <property type="project" value="UniProtKB-UniRule"/>
</dbReference>
<dbReference type="GO" id="GO:0043022">
    <property type="term" value="F:ribosome binding"/>
    <property type="evidence" value="ECO:0007669"/>
    <property type="project" value="UniProtKB-UniRule"/>
</dbReference>
<dbReference type="GO" id="GO:0003746">
    <property type="term" value="F:translation elongation factor activity"/>
    <property type="evidence" value="ECO:0007669"/>
    <property type="project" value="UniProtKB-UniRule"/>
</dbReference>
<dbReference type="GO" id="GO:0045727">
    <property type="term" value="P:positive regulation of translation"/>
    <property type="evidence" value="ECO:0007669"/>
    <property type="project" value="UniProtKB-UniRule"/>
</dbReference>
<dbReference type="CDD" id="cd03699">
    <property type="entry name" value="EF4_II"/>
    <property type="match status" value="1"/>
</dbReference>
<dbReference type="CDD" id="cd16260">
    <property type="entry name" value="EF4_III"/>
    <property type="match status" value="1"/>
</dbReference>
<dbReference type="CDD" id="cd01890">
    <property type="entry name" value="LepA"/>
    <property type="match status" value="1"/>
</dbReference>
<dbReference type="CDD" id="cd03709">
    <property type="entry name" value="lepA_C"/>
    <property type="match status" value="1"/>
</dbReference>
<dbReference type="FunFam" id="3.40.50.300:FF:000078">
    <property type="entry name" value="Elongation factor 4"/>
    <property type="match status" value="1"/>
</dbReference>
<dbReference type="FunFam" id="2.40.30.10:FF:000015">
    <property type="entry name" value="Translation factor GUF1, mitochondrial"/>
    <property type="match status" value="1"/>
</dbReference>
<dbReference type="FunFam" id="3.30.70.240:FF:000007">
    <property type="entry name" value="Translation factor GUF1, mitochondrial"/>
    <property type="match status" value="1"/>
</dbReference>
<dbReference type="FunFam" id="3.30.70.2570:FF:000001">
    <property type="entry name" value="Translation factor GUF1, mitochondrial"/>
    <property type="match status" value="1"/>
</dbReference>
<dbReference type="FunFam" id="3.30.70.870:FF:000004">
    <property type="entry name" value="Translation factor GUF1, mitochondrial"/>
    <property type="match status" value="1"/>
</dbReference>
<dbReference type="Gene3D" id="3.30.70.240">
    <property type="match status" value="1"/>
</dbReference>
<dbReference type="Gene3D" id="3.30.70.2570">
    <property type="entry name" value="Elongation factor 4, C-terminal domain"/>
    <property type="match status" value="1"/>
</dbReference>
<dbReference type="Gene3D" id="3.30.70.870">
    <property type="entry name" value="Elongation Factor G (Translational Gtpase), domain 3"/>
    <property type="match status" value="1"/>
</dbReference>
<dbReference type="Gene3D" id="3.40.50.300">
    <property type="entry name" value="P-loop containing nucleotide triphosphate hydrolases"/>
    <property type="match status" value="1"/>
</dbReference>
<dbReference type="Gene3D" id="2.40.30.10">
    <property type="entry name" value="Translation factors"/>
    <property type="match status" value="1"/>
</dbReference>
<dbReference type="HAMAP" id="MF_00071">
    <property type="entry name" value="LepA"/>
    <property type="match status" value="1"/>
</dbReference>
<dbReference type="InterPro" id="IPR006297">
    <property type="entry name" value="EF-4"/>
</dbReference>
<dbReference type="InterPro" id="IPR035647">
    <property type="entry name" value="EFG_III/V"/>
</dbReference>
<dbReference type="InterPro" id="IPR000640">
    <property type="entry name" value="EFG_V-like"/>
</dbReference>
<dbReference type="InterPro" id="IPR004161">
    <property type="entry name" value="EFTu-like_2"/>
</dbReference>
<dbReference type="InterPro" id="IPR038363">
    <property type="entry name" value="LepA_C_sf"/>
</dbReference>
<dbReference type="InterPro" id="IPR013842">
    <property type="entry name" value="LepA_CTD"/>
</dbReference>
<dbReference type="InterPro" id="IPR035654">
    <property type="entry name" value="LepA_IV"/>
</dbReference>
<dbReference type="InterPro" id="IPR027417">
    <property type="entry name" value="P-loop_NTPase"/>
</dbReference>
<dbReference type="InterPro" id="IPR005225">
    <property type="entry name" value="Small_GTP-bd"/>
</dbReference>
<dbReference type="InterPro" id="IPR000795">
    <property type="entry name" value="T_Tr_GTP-bd_dom"/>
</dbReference>
<dbReference type="NCBIfam" id="TIGR01393">
    <property type="entry name" value="lepA"/>
    <property type="match status" value="1"/>
</dbReference>
<dbReference type="NCBIfam" id="TIGR00231">
    <property type="entry name" value="small_GTP"/>
    <property type="match status" value="1"/>
</dbReference>
<dbReference type="PANTHER" id="PTHR43512:SF4">
    <property type="entry name" value="TRANSLATION FACTOR GUF1 HOMOLOG, CHLOROPLASTIC"/>
    <property type="match status" value="1"/>
</dbReference>
<dbReference type="PANTHER" id="PTHR43512">
    <property type="entry name" value="TRANSLATION FACTOR GUF1-RELATED"/>
    <property type="match status" value="1"/>
</dbReference>
<dbReference type="Pfam" id="PF00679">
    <property type="entry name" value="EFG_C"/>
    <property type="match status" value="1"/>
</dbReference>
<dbReference type="Pfam" id="PF00009">
    <property type="entry name" value="GTP_EFTU"/>
    <property type="match status" value="1"/>
</dbReference>
<dbReference type="Pfam" id="PF03144">
    <property type="entry name" value="GTP_EFTU_D2"/>
    <property type="match status" value="1"/>
</dbReference>
<dbReference type="Pfam" id="PF06421">
    <property type="entry name" value="LepA_C"/>
    <property type="match status" value="1"/>
</dbReference>
<dbReference type="PRINTS" id="PR00315">
    <property type="entry name" value="ELONGATNFCT"/>
</dbReference>
<dbReference type="SUPFAM" id="SSF54980">
    <property type="entry name" value="EF-G C-terminal domain-like"/>
    <property type="match status" value="2"/>
</dbReference>
<dbReference type="SUPFAM" id="SSF52540">
    <property type="entry name" value="P-loop containing nucleoside triphosphate hydrolases"/>
    <property type="match status" value="1"/>
</dbReference>
<dbReference type="PROSITE" id="PS51722">
    <property type="entry name" value="G_TR_2"/>
    <property type="match status" value="1"/>
</dbReference>
<organism>
    <name type="scientific">Bacteroides fragilis (strain YCH46)</name>
    <dbReference type="NCBI Taxonomy" id="295405"/>
    <lineage>
        <taxon>Bacteria</taxon>
        <taxon>Pseudomonadati</taxon>
        <taxon>Bacteroidota</taxon>
        <taxon>Bacteroidia</taxon>
        <taxon>Bacteroidales</taxon>
        <taxon>Bacteroidaceae</taxon>
        <taxon>Bacteroides</taxon>
    </lineage>
</organism>
<evidence type="ECO:0000255" key="1">
    <source>
        <dbReference type="HAMAP-Rule" id="MF_00071"/>
    </source>
</evidence>
<reference key="1">
    <citation type="journal article" date="2004" name="Proc. Natl. Acad. Sci. U.S.A.">
        <title>Genomic analysis of Bacteroides fragilis reveals extensive DNA inversions regulating cell surface adaptation.</title>
        <authorList>
            <person name="Kuwahara T."/>
            <person name="Yamashita A."/>
            <person name="Hirakawa H."/>
            <person name="Nakayama H."/>
            <person name="Toh H."/>
            <person name="Okada N."/>
            <person name="Kuhara S."/>
            <person name="Hattori M."/>
            <person name="Hayashi T."/>
            <person name="Ohnishi Y."/>
        </authorList>
    </citation>
    <scope>NUCLEOTIDE SEQUENCE [LARGE SCALE GENOMIC DNA]</scope>
    <source>
        <strain>YCH46</strain>
    </source>
</reference>
<sequence>MDKIRNFCIIAHIDHGKSTLADRLLEFTNTIQVTEGQMLDDMDLEKERGITIKSHAIQMEYTYKGEKYILNLIDTPGHVDFSYEVSRSIAACEGALLIVDASQGVQAQTISNLYMAIEHDLEIIPIINKCDMASAMPEEVEDEIVELLGCKRDEIIRASGKTGMGVEEILAAVIERIPHPQGDESAPLQALIFDSVFNSFRGIIAYFKITNGVIRAGDKVKFFNTGKEYVADEIGVLKMEMVPRKELRTGDVGYIISGIKTSKEVKVGDTITHVARPCDKAIAGFEEVKPMVFAGVYPIEAEEFEDLRASLEKLQLNDASLTFQPESSLALGFGFRCGFLGLLHMEIVQERLDREFDMNVITTVPNVSYHIYDKQGNMTEVHNPGGMPDPTMIDHIEEPYIKASIITTTDYIGPIMTLCLGKRGELLKQEYISGNRVELFYNMPLGEIVIDFYDRLKSISKGYASFDYHPDGFRPSKLVKLDILLNGESVDALSTLTHFDNAYDMGRRMCEKLKELIPRQQFEIAIQAAIGAKIIARETIKAVRKDVTAKCYGGDISRKRKLLEKQKKGKKRMKQIGNVEVPQKAFLAVLKLD</sequence>
<gene>
    <name evidence="1" type="primary">lepA</name>
    <name type="ordered locus">BF2556</name>
</gene>
<feature type="chain" id="PRO_0000176228" description="Elongation factor 4">
    <location>
        <begin position="1"/>
        <end position="593"/>
    </location>
</feature>
<feature type="domain" description="tr-type G">
    <location>
        <begin position="2"/>
        <end position="181"/>
    </location>
</feature>
<feature type="binding site" evidence="1">
    <location>
        <begin position="14"/>
        <end position="19"/>
    </location>
    <ligand>
        <name>GTP</name>
        <dbReference type="ChEBI" id="CHEBI:37565"/>
    </ligand>
</feature>
<feature type="binding site" evidence="1">
    <location>
        <begin position="128"/>
        <end position="131"/>
    </location>
    <ligand>
        <name>GTP</name>
        <dbReference type="ChEBI" id="CHEBI:37565"/>
    </ligand>
</feature>
<protein>
    <recommendedName>
        <fullName evidence="1">Elongation factor 4</fullName>
        <shortName evidence="1">EF-4</shortName>
        <ecNumber evidence="1">3.6.5.n1</ecNumber>
    </recommendedName>
    <alternativeName>
        <fullName evidence="1">Ribosomal back-translocase LepA</fullName>
    </alternativeName>
</protein>
<comment type="function">
    <text evidence="1">Required for accurate and efficient protein synthesis under certain stress conditions. May act as a fidelity factor of the translation reaction, by catalyzing a one-codon backward translocation of tRNAs on improperly translocated ribosomes. Back-translocation proceeds from a post-translocation (POST) complex to a pre-translocation (PRE) complex, thus giving elongation factor G a second chance to translocate the tRNAs correctly. Binds to ribosomes in a GTP-dependent manner.</text>
</comment>
<comment type="catalytic activity">
    <reaction evidence="1">
        <text>GTP + H2O = GDP + phosphate + H(+)</text>
        <dbReference type="Rhea" id="RHEA:19669"/>
        <dbReference type="ChEBI" id="CHEBI:15377"/>
        <dbReference type="ChEBI" id="CHEBI:15378"/>
        <dbReference type="ChEBI" id="CHEBI:37565"/>
        <dbReference type="ChEBI" id="CHEBI:43474"/>
        <dbReference type="ChEBI" id="CHEBI:58189"/>
        <dbReference type="EC" id="3.6.5.n1"/>
    </reaction>
</comment>
<comment type="subcellular location">
    <subcellularLocation>
        <location evidence="1">Cell inner membrane</location>
        <topology evidence="1">Peripheral membrane protein</topology>
        <orientation evidence="1">Cytoplasmic side</orientation>
    </subcellularLocation>
</comment>
<comment type="similarity">
    <text evidence="1">Belongs to the TRAFAC class translation factor GTPase superfamily. Classic translation factor GTPase family. LepA subfamily.</text>
</comment>
<keyword id="KW-0997">Cell inner membrane</keyword>
<keyword id="KW-1003">Cell membrane</keyword>
<keyword id="KW-0342">GTP-binding</keyword>
<keyword id="KW-0378">Hydrolase</keyword>
<keyword id="KW-0472">Membrane</keyword>
<keyword id="KW-0547">Nucleotide-binding</keyword>
<keyword id="KW-0648">Protein biosynthesis</keyword>
<proteinExistence type="inferred from homology"/>